<evidence type="ECO:0000250" key="1"/>
<evidence type="ECO:0000255" key="2"/>
<evidence type="ECO:0000305" key="3"/>
<reference key="1">
    <citation type="patent" date="2003-11-11" number="JP2003533178">
        <title>O-superfamily conotoxin peptides.</title>
        <authorList>
            <person name="Hillyard D.R."/>
            <person name="Mcintosh M.J."/>
            <person name="Jones R.M."/>
            <person name="Cartier E.G."/>
            <person name="Watkins M."/>
            <person name="Olivera B.M."/>
            <person name="Layer R.T."/>
        </authorList>
    </citation>
    <scope>NUCLEOTIDE SEQUENCE</scope>
</reference>
<name>O163_CONAJ</name>
<keyword id="KW-0108">Calcium channel impairing toxin</keyword>
<keyword id="KW-0165">Cleavage on pair of basic residues</keyword>
<keyword id="KW-1015">Disulfide bond</keyword>
<keyword id="KW-0872">Ion channel impairing toxin</keyword>
<keyword id="KW-0960">Knottin</keyword>
<keyword id="KW-0528">Neurotoxin</keyword>
<keyword id="KW-0638">Presynaptic neurotoxin</keyword>
<keyword id="KW-0964">Secreted</keyword>
<keyword id="KW-0732">Signal</keyword>
<keyword id="KW-0800">Toxin</keyword>
<keyword id="KW-1218">Voltage-gated calcium channel impairing toxin</keyword>
<protein>
    <recommendedName>
        <fullName>Omega-conotoxin-like Ai6.3</fullName>
    </recommendedName>
</protein>
<sequence>MKLTCLMIVAVLFLTAWTFVTAVPDSSNALENLYLKAHHEMNNPEDSELNKRCYDGGTSCNTGNQCCSGWCIFLCL</sequence>
<comment type="function">
    <text evidence="1">Omega-conotoxins act at presynaptic membranes, they bind and block voltage-gated calcium channels (Cav).</text>
</comment>
<comment type="subcellular location">
    <subcellularLocation>
        <location evidence="1">Secreted</location>
    </subcellularLocation>
</comment>
<comment type="tissue specificity">
    <text>Expressed by the venom duct.</text>
</comment>
<comment type="domain">
    <text evidence="1">The presence of a 'disulfide through disulfide knot' structurally defines this protein as a knottin.</text>
</comment>
<comment type="domain">
    <text>The cysteine framework is VI/VII (C-C-CC-C-C).</text>
</comment>
<comment type="similarity">
    <text evidence="3">Belongs to the conotoxin O1 superfamily.</text>
</comment>
<accession>P0CB11</accession>
<organism>
    <name type="scientific">Conus ammiralis</name>
    <name type="common">Admiral cone</name>
    <dbReference type="NCBI Taxonomy" id="97188"/>
    <lineage>
        <taxon>Eukaryota</taxon>
        <taxon>Metazoa</taxon>
        <taxon>Spiralia</taxon>
        <taxon>Lophotrochozoa</taxon>
        <taxon>Mollusca</taxon>
        <taxon>Gastropoda</taxon>
        <taxon>Caenogastropoda</taxon>
        <taxon>Neogastropoda</taxon>
        <taxon>Conoidea</taxon>
        <taxon>Conidae</taxon>
        <taxon>Conus</taxon>
        <taxon>Cylinder</taxon>
    </lineage>
</organism>
<dbReference type="EMBL" id="DJ379451">
    <property type="status" value="NOT_ANNOTATED_CDS"/>
    <property type="molecule type" value="Unassigned_DNA"/>
</dbReference>
<dbReference type="ConoServer" id="3100">
    <property type="toxin name" value="Ai6.3 precursor"/>
</dbReference>
<dbReference type="GO" id="GO:0005576">
    <property type="term" value="C:extracellular region"/>
    <property type="evidence" value="ECO:0007669"/>
    <property type="project" value="UniProtKB-SubCell"/>
</dbReference>
<dbReference type="GO" id="GO:0044231">
    <property type="term" value="C:host cell presynaptic membrane"/>
    <property type="evidence" value="ECO:0007669"/>
    <property type="project" value="UniProtKB-KW"/>
</dbReference>
<dbReference type="GO" id="GO:0005246">
    <property type="term" value="F:calcium channel regulator activity"/>
    <property type="evidence" value="ECO:0007669"/>
    <property type="project" value="UniProtKB-KW"/>
</dbReference>
<dbReference type="GO" id="GO:0008200">
    <property type="term" value="F:ion channel inhibitor activity"/>
    <property type="evidence" value="ECO:0007669"/>
    <property type="project" value="InterPro"/>
</dbReference>
<dbReference type="GO" id="GO:0090729">
    <property type="term" value="F:toxin activity"/>
    <property type="evidence" value="ECO:0007669"/>
    <property type="project" value="UniProtKB-KW"/>
</dbReference>
<dbReference type="InterPro" id="IPR004214">
    <property type="entry name" value="Conotoxin"/>
</dbReference>
<dbReference type="Pfam" id="PF02950">
    <property type="entry name" value="Conotoxin"/>
    <property type="match status" value="1"/>
</dbReference>
<feature type="signal peptide" evidence="2">
    <location>
        <begin position="1"/>
        <end position="22"/>
    </location>
</feature>
<feature type="propeptide" id="PRO_0000380624" evidence="1">
    <location>
        <begin position="23"/>
        <end position="50"/>
    </location>
</feature>
<feature type="peptide" id="PRO_0000380625" description="Omega-conotoxin-like Ai6.3">
    <location>
        <begin position="53"/>
        <end position="76"/>
    </location>
</feature>
<feature type="disulfide bond" evidence="1">
    <location>
        <begin position="53"/>
        <end position="67"/>
    </location>
</feature>
<feature type="disulfide bond" evidence="1">
    <location>
        <begin position="60"/>
        <end position="71"/>
    </location>
</feature>
<feature type="disulfide bond" evidence="1">
    <location>
        <begin position="66"/>
        <end position="75"/>
    </location>
</feature>
<proteinExistence type="evidence at transcript level"/>